<evidence type="ECO:0000255" key="1">
    <source>
        <dbReference type="HAMAP-Rule" id="MF_01374"/>
    </source>
</evidence>
<gene>
    <name evidence="1" type="primary">gloB</name>
    <name type="ordered locus">WIGBR0670</name>
</gene>
<feature type="chain" id="PRO_0000309725" description="Hydroxyacylglutathione hydrolase">
    <location>
        <begin position="1"/>
        <end position="251"/>
    </location>
</feature>
<feature type="binding site" evidence="1">
    <location>
        <position position="53"/>
    </location>
    <ligand>
        <name>Zn(2+)</name>
        <dbReference type="ChEBI" id="CHEBI:29105"/>
        <label>1</label>
    </ligand>
</feature>
<feature type="binding site" evidence="1">
    <location>
        <position position="55"/>
    </location>
    <ligand>
        <name>Zn(2+)</name>
        <dbReference type="ChEBI" id="CHEBI:29105"/>
        <label>1</label>
    </ligand>
</feature>
<feature type="binding site" evidence="1">
    <location>
        <position position="57"/>
    </location>
    <ligand>
        <name>Zn(2+)</name>
        <dbReference type="ChEBI" id="CHEBI:29105"/>
        <label>2</label>
    </ligand>
</feature>
<feature type="binding site" evidence="1">
    <location>
        <position position="58"/>
    </location>
    <ligand>
        <name>Zn(2+)</name>
        <dbReference type="ChEBI" id="CHEBI:29105"/>
        <label>2</label>
    </ligand>
</feature>
<feature type="binding site" evidence="1">
    <location>
        <position position="109"/>
    </location>
    <ligand>
        <name>Zn(2+)</name>
        <dbReference type="ChEBI" id="CHEBI:29105"/>
        <label>1</label>
    </ligand>
</feature>
<feature type="binding site" evidence="1">
    <location>
        <position position="126"/>
    </location>
    <ligand>
        <name>Zn(2+)</name>
        <dbReference type="ChEBI" id="CHEBI:29105"/>
        <label>1</label>
    </ligand>
</feature>
<feature type="binding site" evidence="1">
    <location>
        <position position="126"/>
    </location>
    <ligand>
        <name>Zn(2+)</name>
        <dbReference type="ChEBI" id="CHEBI:29105"/>
        <label>2</label>
    </ligand>
</feature>
<feature type="binding site" evidence="1">
    <location>
        <position position="164"/>
    </location>
    <ligand>
        <name>Zn(2+)</name>
        <dbReference type="ChEBI" id="CHEBI:29105"/>
        <label>2</label>
    </ligand>
</feature>
<name>GLO2_WIGBR</name>
<keyword id="KW-0378">Hydrolase</keyword>
<keyword id="KW-0479">Metal-binding</keyword>
<keyword id="KW-1185">Reference proteome</keyword>
<keyword id="KW-0862">Zinc</keyword>
<comment type="function">
    <text evidence="1">Thiolesterase that catalyzes the hydrolysis of S-D-lactoyl-glutathione to form glutathione and D-lactic acid.</text>
</comment>
<comment type="catalytic activity">
    <reaction evidence="1">
        <text>an S-(2-hydroxyacyl)glutathione + H2O = a 2-hydroxy carboxylate + glutathione + H(+)</text>
        <dbReference type="Rhea" id="RHEA:21864"/>
        <dbReference type="ChEBI" id="CHEBI:15377"/>
        <dbReference type="ChEBI" id="CHEBI:15378"/>
        <dbReference type="ChEBI" id="CHEBI:57925"/>
        <dbReference type="ChEBI" id="CHEBI:58896"/>
        <dbReference type="ChEBI" id="CHEBI:71261"/>
        <dbReference type="EC" id="3.1.2.6"/>
    </reaction>
</comment>
<comment type="cofactor">
    <cofactor evidence="1">
        <name>Zn(2+)</name>
        <dbReference type="ChEBI" id="CHEBI:29105"/>
    </cofactor>
    <text evidence="1">Binds 2 Zn(2+) ions per subunit.</text>
</comment>
<comment type="pathway">
    <text evidence="1">Secondary metabolite metabolism; methylglyoxal degradation; (R)-lactate from methylglyoxal: step 2/2.</text>
</comment>
<comment type="subunit">
    <text evidence="1">Monomer.</text>
</comment>
<comment type="similarity">
    <text evidence="1">Belongs to the metallo-beta-lactamase superfamily. Glyoxalase II family.</text>
</comment>
<sequence>MNLVSISINEDNYIWLLYNNDKNCIIVDPGEFISIHNICKKKKLTPVAIFLTHHHHDHVDGVESLKTYFNTPVYGPKETIKYGTTKIVKEGDEIFLLNKCFKVFELPGHTLGHVGFYSPPWFFCGDTLFSAGCGRLFEGSAKDMYFSIKKINSLPPNTLICAGHEYTLQNLNFAISVFPKNTILSMYKKKVEKLNFYKKPTLPSALYLERQINIFLNPYNFEFKGELKRLLLQEEWVLFKKLRDMKNNFIY</sequence>
<protein>
    <recommendedName>
        <fullName evidence="1">Hydroxyacylglutathione hydrolase</fullName>
        <ecNumber evidence="1">3.1.2.6</ecNumber>
    </recommendedName>
    <alternativeName>
        <fullName evidence="1">Glyoxalase II</fullName>
        <shortName evidence="1">Glx II</shortName>
    </alternativeName>
</protein>
<accession>Q8D3D4</accession>
<reference key="1">
    <citation type="journal article" date="2002" name="Nat. Genet.">
        <title>Genome sequence of the endocellular obligate symbiont of tsetse flies, Wigglesworthia glossinidia.</title>
        <authorList>
            <person name="Akman L."/>
            <person name="Yamashita A."/>
            <person name="Watanabe H."/>
            <person name="Oshima K."/>
            <person name="Shiba T."/>
            <person name="Hattori M."/>
            <person name="Aksoy S."/>
        </authorList>
    </citation>
    <scope>NUCLEOTIDE SEQUENCE [LARGE SCALE GENOMIC DNA]</scope>
</reference>
<proteinExistence type="inferred from homology"/>
<dbReference type="EC" id="3.1.2.6" evidence="1"/>
<dbReference type="EMBL" id="BA000021">
    <property type="protein sequence ID" value="BAC24213.1"/>
    <property type="molecule type" value="Genomic_DNA"/>
</dbReference>
<dbReference type="SMR" id="Q8D3D4"/>
<dbReference type="STRING" id="36870.gene:10368545"/>
<dbReference type="KEGG" id="wbr:gloB"/>
<dbReference type="eggNOG" id="COG0491">
    <property type="taxonomic scope" value="Bacteria"/>
</dbReference>
<dbReference type="HOGENOM" id="CLU_030571_4_1_6"/>
<dbReference type="OrthoDB" id="9802248at2"/>
<dbReference type="UniPathway" id="UPA00619">
    <property type="reaction ID" value="UER00676"/>
</dbReference>
<dbReference type="Proteomes" id="UP000000562">
    <property type="component" value="Chromosome"/>
</dbReference>
<dbReference type="GO" id="GO:0004416">
    <property type="term" value="F:hydroxyacylglutathione hydrolase activity"/>
    <property type="evidence" value="ECO:0007669"/>
    <property type="project" value="UniProtKB-UniRule"/>
</dbReference>
<dbReference type="GO" id="GO:0046872">
    <property type="term" value="F:metal ion binding"/>
    <property type="evidence" value="ECO:0007669"/>
    <property type="project" value="UniProtKB-KW"/>
</dbReference>
<dbReference type="GO" id="GO:0019243">
    <property type="term" value="P:methylglyoxal catabolic process to D-lactate via S-lactoyl-glutathione"/>
    <property type="evidence" value="ECO:0007669"/>
    <property type="project" value="InterPro"/>
</dbReference>
<dbReference type="CDD" id="cd07723">
    <property type="entry name" value="hydroxyacylglutathione_hydrolase_MBL-fold"/>
    <property type="match status" value="1"/>
</dbReference>
<dbReference type="Gene3D" id="3.60.15.10">
    <property type="entry name" value="Ribonuclease Z/Hydroxyacylglutathione hydrolase-like"/>
    <property type="match status" value="1"/>
</dbReference>
<dbReference type="HAMAP" id="MF_01374">
    <property type="entry name" value="Glyoxalase_2"/>
    <property type="match status" value="1"/>
</dbReference>
<dbReference type="InterPro" id="IPR035680">
    <property type="entry name" value="Clx_II_MBL"/>
</dbReference>
<dbReference type="InterPro" id="IPR050110">
    <property type="entry name" value="Glyoxalase_II_hydrolase"/>
</dbReference>
<dbReference type="InterPro" id="IPR032282">
    <property type="entry name" value="HAGH_C"/>
</dbReference>
<dbReference type="InterPro" id="IPR017782">
    <property type="entry name" value="Hydroxyacylglutathione_Hdrlase"/>
</dbReference>
<dbReference type="InterPro" id="IPR001279">
    <property type="entry name" value="Metallo-B-lactamas"/>
</dbReference>
<dbReference type="InterPro" id="IPR036866">
    <property type="entry name" value="RibonucZ/Hydroxyglut_hydro"/>
</dbReference>
<dbReference type="NCBIfam" id="TIGR03413">
    <property type="entry name" value="GSH_gloB"/>
    <property type="match status" value="1"/>
</dbReference>
<dbReference type="PANTHER" id="PTHR43705">
    <property type="entry name" value="HYDROXYACYLGLUTATHIONE HYDROLASE"/>
    <property type="match status" value="1"/>
</dbReference>
<dbReference type="PANTHER" id="PTHR43705:SF1">
    <property type="entry name" value="HYDROXYACYLGLUTATHIONE HYDROLASE GLOB"/>
    <property type="match status" value="1"/>
</dbReference>
<dbReference type="Pfam" id="PF16123">
    <property type="entry name" value="HAGH_C"/>
    <property type="match status" value="1"/>
</dbReference>
<dbReference type="Pfam" id="PF00753">
    <property type="entry name" value="Lactamase_B"/>
    <property type="match status" value="1"/>
</dbReference>
<dbReference type="PIRSF" id="PIRSF005457">
    <property type="entry name" value="Glx"/>
    <property type="match status" value="1"/>
</dbReference>
<dbReference type="SMART" id="SM00849">
    <property type="entry name" value="Lactamase_B"/>
    <property type="match status" value="1"/>
</dbReference>
<dbReference type="SUPFAM" id="SSF56281">
    <property type="entry name" value="Metallo-hydrolase/oxidoreductase"/>
    <property type="match status" value="1"/>
</dbReference>
<organism>
    <name type="scientific">Wigglesworthia glossinidia brevipalpis</name>
    <dbReference type="NCBI Taxonomy" id="36870"/>
    <lineage>
        <taxon>Bacteria</taxon>
        <taxon>Pseudomonadati</taxon>
        <taxon>Pseudomonadota</taxon>
        <taxon>Gammaproteobacteria</taxon>
        <taxon>Enterobacterales</taxon>
        <taxon>Erwiniaceae</taxon>
        <taxon>Wigglesworthia</taxon>
    </lineage>
</organism>